<sequence length="127" mass="14187">MEINSNSSLWHSYNSGYNGNKPHPLSPKGDQVKVSITEDRHYKDVKQPVSPDYVAESFSEAMKNALTSVNDLQVEADELTQKMVFDPNSVDAHQVMIASEKARVALTFTKTIADGVVRAYRELTSLR</sequence>
<comment type="subcellular location">
    <subcellularLocation>
        <location evidence="1">Bacterial flagellum basal body</location>
    </subcellularLocation>
</comment>
<comment type="similarity">
    <text evidence="1">Belongs to the FliE family.</text>
</comment>
<accession>Q8F952</accession>
<organism>
    <name type="scientific">Leptospira interrogans serogroup Icterohaemorrhagiae serovar Lai (strain 56601)</name>
    <dbReference type="NCBI Taxonomy" id="189518"/>
    <lineage>
        <taxon>Bacteria</taxon>
        <taxon>Pseudomonadati</taxon>
        <taxon>Spirochaetota</taxon>
        <taxon>Spirochaetia</taxon>
        <taxon>Leptospirales</taxon>
        <taxon>Leptospiraceae</taxon>
        <taxon>Leptospira</taxon>
    </lineage>
</organism>
<protein>
    <recommendedName>
        <fullName evidence="1">Flagellar hook-basal body complex protein FliE</fullName>
    </recommendedName>
</protein>
<proteinExistence type="inferred from homology"/>
<reference key="1">
    <citation type="journal article" date="2003" name="Nature">
        <title>Unique physiological and pathogenic features of Leptospira interrogans revealed by whole-genome sequencing.</title>
        <authorList>
            <person name="Ren S.-X."/>
            <person name="Fu G."/>
            <person name="Jiang X.-G."/>
            <person name="Zeng R."/>
            <person name="Miao Y.-G."/>
            <person name="Xu H."/>
            <person name="Zhang Y.-X."/>
            <person name="Xiong H."/>
            <person name="Lu G."/>
            <person name="Lu L.-F."/>
            <person name="Jiang H.-Q."/>
            <person name="Jia J."/>
            <person name="Tu Y.-F."/>
            <person name="Jiang J.-X."/>
            <person name="Gu W.-Y."/>
            <person name="Zhang Y.-Q."/>
            <person name="Cai Z."/>
            <person name="Sheng H.-H."/>
            <person name="Yin H.-F."/>
            <person name="Zhang Y."/>
            <person name="Zhu G.-F."/>
            <person name="Wan M."/>
            <person name="Huang H.-L."/>
            <person name="Qian Z."/>
            <person name="Wang S.-Y."/>
            <person name="Ma W."/>
            <person name="Yao Z.-J."/>
            <person name="Shen Y."/>
            <person name="Qiang B.-Q."/>
            <person name="Xia Q.-C."/>
            <person name="Guo X.-K."/>
            <person name="Danchin A."/>
            <person name="Saint Girons I."/>
            <person name="Somerville R.L."/>
            <person name="Wen Y.-M."/>
            <person name="Shi M.-H."/>
            <person name="Chen Z."/>
            <person name="Xu J.-G."/>
            <person name="Zhao G.-P."/>
        </authorList>
    </citation>
    <scope>NUCLEOTIDE SEQUENCE [LARGE SCALE GENOMIC DNA]</scope>
    <source>
        <strain>56601</strain>
    </source>
</reference>
<keyword id="KW-0975">Bacterial flagellum</keyword>
<keyword id="KW-1185">Reference proteome</keyword>
<feature type="chain" id="PRO_0000105549" description="Flagellar hook-basal body complex protein FliE">
    <location>
        <begin position="1"/>
        <end position="127"/>
    </location>
</feature>
<gene>
    <name evidence="1" type="primary">fliE</name>
    <name type="ordered locus">LA_0345</name>
</gene>
<dbReference type="EMBL" id="AE010300">
    <property type="protein sequence ID" value="AAN47544.1"/>
    <property type="molecule type" value="Genomic_DNA"/>
</dbReference>
<dbReference type="RefSeq" id="NP_710526.1">
    <property type="nucleotide sequence ID" value="NC_004342.2"/>
</dbReference>
<dbReference type="RefSeq" id="WP_000405186.1">
    <property type="nucleotide sequence ID" value="NC_004342.2"/>
</dbReference>
<dbReference type="SMR" id="Q8F952"/>
<dbReference type="STRING" id="189518.LA_0345"/>
<dbReference type="PaxDb" id="189518-LA_0345"/>
<dbReference type="EnsemblBacteria" id="AAN47544">
    <property type="protein sequence ID" value="AAN47544"/>
    <property type="gene ID" value="LA_0345"/>
</dbReference>
<dbReference type="GeneID" id="61143652"/>
<dbReference type="KEGG" id="lil:LA_0345"/>
<dbReference type="PATRIC" id="fig|189518.3.peg.351"/>
<dbReference type="HOGENOM" id="CLU_147249_4_0_12"/>
<dbReference type="InParanoid" id="Q8F952"/>
<dbReference type="OrthoDB" id="336111at2"/>
<dbReference type="Proteomes" id="UP000001408">
    <property type="component" value="Chromosome I"/>
</dbReference>
<dbReference type="GO" id="GO:0009425">
    <property type="term" value="C:bacterial-type flagellum basal body"/>
    <property type="evidence" value="ECO:0007669"/>
    <property type="project" value="UniProtKB-SubCell"/>
</dbReference>
<dbReference type="GO" id="GO:0003774">
    <property type="term" value="F:cytoskeletal motor activity"/>
    <property type="evidence" value="ECO:0007669"/>
    <property type="project" value="InterPro"/>
</dbReference>
<dbReference type="GO" id="GO:0005198">
    <property type="term" value="F:structural molecule activity"/>
    <property type="evidence" value="ECO:0007669"/>
    <property type="project" value="InterPro"/>
</dbReference>
<dbReference type="GO" id="GO:0044780">
    <property type="term" value="P:bacterial-type flagellum assembly"/>
    <property type="evidence" value="ECO:0000318"/>
    <property type="project" value="GO_Central"/>
</dbReference>
<dbReference type="GO" id="GO:0071973">
    <property type="term" value="P:bacterial-type flagellum-dependent cell motility"/>
    <property type="evidence" value="ECO:0007669"/>
    <property type="project" value="InterPro"/>
</dbReference>
<dbReference type="HAMAP" id="MF_00724">
    <property type="entry name" value="FliE"/>
    <property type="match status" value="1"/>
</dbReference>
<dbReference type="InterPro" id="IPR001624">
    <property type="entry name" value="FliE"/>
</dbReference>
<dbReference type="NCBIfam" id="TIGR00205">
    <property type="entry name" value="fliE"/>
    <property type="match status" value="1"/>
</dbReference>
<dbReference type="NCBIfam" id="NF009371">
    <property type="entry name" value="PRK12729.1"/>
    <property type="match status" value="1"/>
</dbReference>
<dbReference type="PANTHER" id="PTHR34653">
    <property type="match status" value="1"/>
</dbReference>
<dbReference type="PANTHER" id="PTHR34653:SF1">
    <property type="entry name" value="FLAGELLAR HOOK-BASAL BODY COMPLEX PROTEIN FLIE"/>
    <property type="match status" value="1"/>
</dbReference>
<dbReference type="Pfam" id="PF02049">
    <property type="entry name" value="FliE"/>
    <property type="match status" value="1"/>
</dbReference>
<dbReference type="PRINTS" id="PR01006">
    <property type="entry name" value="FLGHOOKFLIE"/>
</dbReference>
<evidence type="ECO:0000255" key="1">
    <source>
        <dbReference type="HAMAP-Rule" id="MF_00724"/>
    </source>
</evidence>
<name>FLIE_LEPIN</name>